<proteinExistence type="evidence at transcript level"/>
<reference key="1">
    <citation type="journal article" date="2009" name="Science">
        <title>The B73 maize genome: complexity, diversity, and dynamics.</title>
        <authorList>
            <person name="Schnable P.S."/>
            <person name="Ware D."/>
            <person name="Fulton R.S."/>
            <person name="Stein J.C."/>
            <person name="Wei F."/>
            <person name="Pasternak S."/>
            <person name="Liang C."/>
            <person name="Zhang J."/>
            <person name="Fulton L."/>
            <person name="Graves T.A."/>
            <person name="Minx P."/>
            <person name="Reily A.D."/>
            <person name="Courtney L."/>
            <person name="Kruchowski S.S."/>
            <person name="Tomlinson C."/>
            <person name="Strong C."/>
            <person name="Delehaunty K."/>
            <person name="Fronick C."/>
            <person name="Courtney B."/>
            <person name="Rock S.M."/>
            <person name="Belter E."/>
            <person name="Du F."/>
            <person name="Kim K."/>
            <person name="Abbott R.M."/>
            <person name="Cotton M."/>
            <person name="Levy A."/>
            <person name="Marchetto P."/>
            <person name="Ochoa K."/>
            <person name="Jackson S.M."/>
            <person name="Gillam B."/>
            <person name="Chen W."/>
            <person name="Yan L."/>
            <person name="Higginbotham J."/>
            <person name="Cardenas M."/>
            <person name="Waligorski J."/>
            <person name="Applebaum E."/>
            <person name="Phelps L."/>
            <person name="Falcone J."/>
            <person name="Kanchi K."/>
            <person name="Thane T."/>
            <person name="Scimone A."/>
            <person name="Thane N."/>
            <person name="Henke J."/>
            <person name="Wang T."/>
            <person name="Ruppert J."/>
            <person name="Shah N."/>
            <person name="Rotter K."/>
            <person name="Hodges J."/>
            <person name="Ingenthron E."/>
            <person name="Cordes M."/>
            <person name="Kohlberg S."/>
            <person name="Sgro J."/>
            <person name="Delgado B."/>
            <person name="Mead K."/>
            <person name="Chinwalla A."/>
            <person name="Leonard S."/>
            <person name="Crouse K."/>
            <person name="Collura K."/>
            <person name="Kudrna D."/>
            <person name="Currie J."/>
            <person name="He R."/>
            <person name="Angelova A."/>
            <person name="Rajasekar S."/>
            <person name="Mueller T."/>
            <person name="Lomeli R."/>
            <person name="Scara G."/>
            <person name="Ko A."/>
            <person name="Delaney K."/>
            <person name="Wissotski M."/>
            <person name="Lopez G."/>
            <person name="Campos D."/>
            <person name="Braidotti M."/>
            <person name="Ashley E."/>
            <person name="Golser W."/>
            <person name="Kim H."/>
            <person name="Lee S."/>
            <person name="Lin J."/>
            <person name="Dujmic Z."/>
            <person name="Kim W."/>
            <person name="Talag J."/>
            <person name="Zuccolo A."/>
            <person name="Fan C."/>
            <person name="Sebastian A."/>
            <person name="Kramer M."/>
            <person name="Spiegel L."/>
            <person name="Nascimento L."/>
            <person name="Zutavern T."/>
            <person name="Miller B."/>
            <person name="Ambroise C."/>
            <person name="Muller S."/>
            <person name="Spooner W."/>
            <person name="Narechania A."/>
            <person name="Ren L."/>
            <person name="Wei S."/>
            <person name="Kumari S."/>
            <person name="Faga B."/>
            <person name="Levy M.J."/>
            <person name="McMahan L."/>
            <person name="Van Buren P."/>
            <person name="Vaughn M.W."/>
            <person name="Ying K."/>
            <person name="Yeh C.-T."/>
            <person name="Emrich S.J."/>
            <person name="Jia Y."/>
            <person name="Kalyanaraman A."/>
            <person name="Hsia A.-P."/>
            <person name="Barbazuk W.B."/>
            <person name="Baucom R.S."/>
            <person name="Brutnell T.P."/>
            <person name="Carpita N.C."/>
            <person name="Chaparro C."/>
            <person name="Chia J.-M."/>
            <person name="Deragon J.-M."/>
            <person name="Estill J.C."/>
            <person name="Fu Y."/>
            <person name="Jeddeloh J.A."/>
            <person name="Han Y."/>
            <person name="Lee H."/>
            <person name="Li P."/>
            <person name="Lisch D.R."/>
            <person name="Liu S."/>
            <person name="Liu Z."/>
            <person name="Nagel D.H."/>
            <person name="McCann M.C."/>
            <person name="SanMiguel P."/>
            <person name="Myers A.M."/>
            <person name="Nettleton D."/>
            <person name="Nguyen J."/>
            <person name="Penning B.W."/>
            <person name="Ponnala L."/>
            <person name="Schneider K.L."/>
            <person name="Schwartz D.C."/>
            <person name="Sharma A."/>
            <person name="Soderlund C."/>
            <person name="Springer N.M."/>
            <person name="Sun Q."/>
            <person name="Wang H."/>
            <person name="Waterman M."/>
            <person name="Westerman R."/>
            <person name="Wolfgruber T.K."/>
            <person name="Yang L."/>
            <person name="Yu Y."/>
            <person name="Zhang L."/>
            <person name="Zhou S."/>
            <person name="Zhu Q."/>
            <person name="Bennetzen J.L."/>
            <person name="Dawe R.K."/>
            <person name="Jiang J."/>
            <person name="Jiang N."/>
            <person name="Presting G.G."/>
            <person name="Wessler S.R."/>
            <person name="Aluru S."/>
            <person name="Martienssen R.A."/>
            <person name="Clifton S.W."/>
            <person name="McCombie W.R."/>
            <person name="Wing R.A."/>
            <person name="Wilson R.K."/>
        </authorList>
    </citation>
    <scope>NUCLEOTIDE SEQUENCE [LARGE SCALE GENOMIC DNA]</scope>
    <source>
        <strain>cv. B73</strain>
    </source>
</reference>
<reference key="2">
    <citation type="journal article" date="2009" name="Plant Mol. Biol.">
        <title>Insights into corn genes derived from large-scale cDNA sequencing.</title>
        <authorList>
            <person name="Alexandrov N.N."/>
            <person name="Brover V.V."/>
            <person name="Freidin S."/>
            <person name="Troukhan M.E."/>
            <person name="Tatarinova T.V."/>
            <person name="Zhang H."/>
            <person name="Swaller T.J."/>
            <person name="Lu Y.-P."/>
            <person name="Bouck J."/>
            <person name="Flavell R.B."/>
            <person name="Feldmann K.A."/>
        </authorList>
    </citation>
    <scope>NUCLEOTIDE SEQUENCE [LARGE SCALE MRNA]</scope>
</reference>
<reference key="3">
    <citation type="journal article" date="2014" name="Nucleic Acids Res.">
        <title>An mTERF domain protein functions in group II intron splicing in maize chloroplasts.</title>
        <authorList>
            <person name="Hammani K."/>
            <person name="Barkan A."/>
        </authorList>
    </citation>
    <scope>FUNCTION</scope>
    <scope>SUBCELLULAR LOCATION</scope>
    <scope>DISRUPTION PHENOTYPE</scope>
</reference>
<protein>
    <recommendedName>
        <fullName evidence="5">Transcription termination factor MTERF4, chloroplastic</fullName>
    </recommendedName>
    <alternativeName>
        <fullName evidence="4">Mitochondrial transcription termination factor 4</fullName>
    </alternativeName>
</protein>
<comment type="function">
    <text evidence="3">Transcription termination factor required for processing and steady-state levels of plastid transcripts. Required for splicing of the chloroplastic group II intron. Required for the accumulation of 16S and 23S ribosomes.</text>
</comment>
<comment type="subcellular location">
    <subcellularLocation>
        <location evidence="3">Plastid</location>
        <location evidence="3">Chloroplast stroma</location>
    </subcellularLocation>
</comment>
<comment type="disruption phenotype">
    <text evidence="3">Seedling lethality.</text>
</comment>
<comment type="similarity">
    <text evidence="5">Belongs to the mTERF family.</text>
</comment>
<organism>
    <name type="scientific">Zea mays</name>
    <name type="common">Maize</name>
    <dbReference type="NCBI Taxonomy" id="4577"/>
    <lineage>
        <taxon>Eukaryota</taxon>
        <taxon>Viridiplantae</taxon>
        <taxon>Streptophyta</taxon>
        <taxon>Embryophyta</taxon>
        <taxon>Tracheophyta</taxon>
        <taxon>Spermatophyta</taxon>
        <taxon>Magnoliopsida</taxon>
        <taxon>Liliopsida</taxon>
        <taxon>Poales</taxon>
        <taxon>Poaceae</taxon>
        <taxon>PACMAD clade</taxon>
        <taxon>Panicoideae</taxon>
        <taxon>Andropogonodae</taxon>
        <taxon>Andropogoneae</taxon>
        <taxon>Tripsacinae</taxon>
        <taxon>Zea</taxon>
    </lineage>
</organism>
<accession>B6TGN4</accession>
<gene>
    <name evidence="4" type="primary">MTERF4</name>
    <name evidence="6" type="ORF">ZEAMMB73_Zm00001d010340</name>
</gene>
<name>MTEF4_MAIZE</name>
<sequence>MMKSLLFSAHPTSLLLPAPRLRRLLRLRAASSASASAPPRADRRSPGTPSRRPSSSLYARPSLLDMERDRATRRADVDAFLTSLGVDPGELAGLELPVTVDVMRERAEFLGSLGLTQEDLAAYPLALGCSVRKNMVPVLDYLGKLGVRRDALPDLLRRYPQVLHASVVVDLAPVVKYLQGMDVRPTDVPRVLERYPELLGFKLEGTMSTSVAYLVGIGVGRRQVGSVITRFPEVLGMRVGKIIKPFVEHLEGIGLQRLAIARIIEKKPYVLGFGLQEKVKPNIEALVDIGVRKEALASIVMQYPDVLGLELRDKLVAQQSLFESSILVSREDFGRVLERMPQAISLGRAAVLKHVNFLTACGFMLSQVSKMVVACPQLLALNIDIMRMNFEYFKNEMERDLEELVEFPAFFTYGIESTVRPRHEMVSRKGLTCSLAWLLNCSDAKFDERMKYDTIGVEEMEREDSSDMNASVDEVESEEYEDSDYGDSDDEFVR</sequence>
<dbReference type="EMBL" id="CM000784">
    <property type="protein sequence ID" value="AQK93897.1"/>
    <property type="molecule type" value="Genomic_DNA"/>
</dbReference>
<dbReference type="EMBL" id="EU964149">
    <property type="protein sequence ID" value="ACG36267.1"/>
    <property type="molecule type" value="mRNA"/>
</dbReference>
<dbReference type="RefSeq" id="NP_001149660.1">
    <property type="nucleotide sequence ID" value="NM_001156188.1"/>
</dbReference>
<dbReference type="SMR" id="B6TGN4"/>
<dbReference type="FunCoup" id="B6TGN4">
    <property type="interactions" value="3101"/>
</dbReference>
<dbReference type="STRING" id="4577.B6TGN4"/>
<dbReference type="PaxDb" id="4577-GRMZM2G029933_P01"/>
<dbReference type="EnsemblPlants" id="Zm00001eb349900_T001">
    <property type="protein sequence ID" value="Zm00001eb349900_P001"/>
    <property type="gene ID" value="Zm00001eb349900"/>
</dbReference>
<dbReference type="EnsemblPlants" id="Zm00001eb349900_T003">
    <property type="protein sequence ID" value="Zm00001eb349900_P003"/>
    <property type="gene ID" value="Zm00001eb349900"/>
</dbReference>
<dbReference type="Gramene" id="Zm00001eb349900_T001">
    <property type="protein sequence ID" value="Zm00001eb349900_P001"/>
    <property type="gene ID" value="Zm00001eb349900"/>
</dbReference>
<dbReference type="Gramene" id="Zm00001eb349900_T003">
    <property type="protein sequence ID" value="Zm00001eb349900_P003"/>
    <property type="gene ID" value="Zm00001eb349900"/>
</dbReference>
<dbReference type="eggNOG" id="KOG1267">
    <property type="taxonomic scope" value="Eukaryota"/>
</dbReference>
<dbReference type="HOGENOM" id="CLU_024229_1_1_1"/>
<dbReference type="InParanoid" id="B6TGN4"/>
<dbReference type="OMA" id="RMDYDTI"/>
<dbReference type="Proteomes" id="UP000007305">
    <property type="component" value="Chromosome 8"/>
</dbReference>
<dbReference type="ExpressionAtlas" id="B6TGN4">
    <property type="expression patterns" value="baseline and differential"/>
</dbReference>
<dbReference type="GO" id="GO:0009570">
    <property type="term" value="C:chloroplast stroma"/>
    <property type="evidence" value="ECO:0000314"/>
    <property type="project" value="UniProtKB"/>
</dbReference>
<dbReference type="GO" id="GO:0003690">
    <property type="term" value="F:double-stranded DNA binding"/>
    <property type="evidence" value="ECO:0007669"/>
    <property type="project" value="InterPro"/>
</dbReference>
<dbReference type="GO" id="GO:0032502">
    <property type="term" value="P:developmental process"/>
    <property type="evidence" value="ECO:0000318"/>
    <property type="project" value="GO_Central"/>
</dbReference>
<dbReference type="GO" id="GO:0006353">
    <property type="term" value="P:DNA-templated transcription termination"/>
    <property type="evidence" value="ECO:0007669"/>
    <property type="project" value="UniProtKB-KW"/>
</dbReference>
<dbReference type="GO" id="GO:0006355">
    <property type="term" value="P:regulation of DNA-templated transcription"/>
    <property type="evidence" value="ECO:0007669"/>
    <property type="project" value="InterPro"/>
</dbReference>
<dbReference type="GO" id="GO:0042254">
    <property type="term" value="P:ribosome biogenesis"/>
    <property type="evidence" value="ECO:0000315"/>
    <property type="project" value="UniProtKB"/>
</dbReference>
<dbReference type="GO" id="GO:0008380">
    <property type="term" value="P:RNA splicing"/>
    <property type="evidence" value="ECO:0000315"/>
    <property type="project" value="UniProtKB"/>
</dbReference>
<dbReference type="FunFam" id="1.25.70.10:FF:000005">
    <property type="entry name" value="Transcription termination factor MTERF4, chloroplastic"/>
    <property type="match status" value="1"/>
</dbReference>
<dbReference type="FunFam" id="1.25.70.10:FF:000004">
    <property type="entry name" value="Transcription termination factor mterf4, chloroplastic"/>
    <property type="match status" value="1"/>
</dbReference>
<dbReference type="Gene3D" id="1.25.70.10">
    <property type="entry name" value="Transcription termination factor 3, mitochondrial"/>
    <property type="match status" value="2"/>
</dbReference>
<dbReference type="InterPro" id="IPR003690">
    <property type="entry name" value="MTERF"/>
</dbReference>
<dbReference type="InterPro" id="IPR038538">
    <property type="entry name" value="MTERF_sf"/>
</dbReference>
<dbReference type="PANTHER" id="PTHR13068">
    <property type="entry name" value="CGI-12 PROTEIN-RELATED"/>
    <property type="match status" value="1"/>
</dbReference>
<dbReference type="PANTHER" id="PTHR13068:SF109">
    <property type="entry name" value="TRANSCRIPTION TERMINATION FACTOR MTERF4, CHLOROPLASTIC"/>
    <property type="match status" value="1"/>
</dbReference>
<dbReference type="Pfam" id="PF02536">
    <property type="entry name" value="mTERF"/>
    <property type="match status" value="1"/>
</dbReference>
<dbReference type="SMART" id="SM00733">
    <property type="entry name" value="Mterf"/>
    <property type="match status" value="9"/>
</dbReference>
<evidence type="ECO:0000255" key="1"/>
<evidence type="ECO:0000256" key="2">
    <source>
        <dbReference type="SAM" id="MobiDB-lite"/>
    </source>
</evidence>
<evidence type="ECO:0000269" key="3">
    <source>
    </source>
</evidence>
<evidence type="ECO:0000303" key="4">
    <source>
    </source>
</evidence>
<evidence type="ECO:0000305" key="5"/>
<evidence type="ECO:0000312" key="6">
    <source>
        <dbReference type="EMBL" id="AQK93897.1"/>
    </source>
</evidence>
<keyword id="KW-0150">Chloroplast</keyword>
<keyword id="KW-0934">Plastid</keyword>
<keyword id="KW-1185">Reference proteome</keyword>
<keyword id="KW-0804">Transcription</keyword>
<keyword id="KW-0805">Transcription regulation</keyword>
<keyword id="KW-0806">Transcription termination</keyword>
<keyword id="KW-0809">Transit peptide</keyword>
<feature type="transit peptide" description="Chloroplast" evidence="1">
    <location>
        <begin position="1"/>
        <end position="54"/>
    </location>
</feature>
<feature type="chain" id="PRO_0000441881" description="Transcription termination factor MTERF4, chloroplastic">
    <location>
        <begin position="55"/>
        <end position="494"/>
    </location>
</feature>
<feature type="region of interest" description="Disordered" evidence="2">
    <location>
        <begin position="32"/>
        <end position="61"/>
    </location>
</feature>
<feature type="region of interest" description="Disordered" evidence="2">
    <location>
        <begin position="457"/>
        <end position="494"/>
    </location>
</feature>
<feature type="compositionally biased region" description="Low complexity" evidence="2">
    <location>
        <begin position="46"/>
        <end position="56"/>
    </location>
</feature>
<feature type="compositionally biased region" description="Acidic residues" evidence="2">
    <location>
        <begin position="457"/>
        <end position="466"/>
    </location>
</feature>
<feature type="compositionally biased region" description="Acidic residues" evidence="2">
    <location>
        <begin position="473"/>
        <end position="494"/>
    </location>
</feature>